<sequence>MEDIVDDVRSSTYQVVENDACGTGKANLLSLSLLYLRSTLKWMIELDAGEAVAIRFVPDPISGHYGDAEVFGAPLVAGSQERWYTFGNEAKFAISSWGGAEVEILGAASTEYMADEPSPTYTYCTNLHLNLERARIRAREQLRTDPSLQKILEDMDVSERTIPASYEQHGAGASGSDLYRAAGQGPRVMIVGPESAGKTSLIKFLANYALRSPALANVKEGDDASRRAKHRSEPEIHPGPDVAHDDDDDDDVENRKDDEESGINDMKHPKNRKKHSSADSQAKKTLSDITGWWPMIVALDPSEGAVPVPGCVSAIPLTPMPTNWLPSPSPALPYGITTQTTGTLPPSVSTVQSVMPISLWMGKENVRENERHSRRVIDWLAYYIEKRLVKDWRARMSGLLLDMPGVITADARTRYGFIQYCVRAFKIDTIVVLGHEKLNLELTRIYANDTSGHAPRIVKVPRSGGAVEVDEVYKQKLHDLQIRSYFYGMPPALTKEAAVTSMSMNDENTPASIPAGLDEHLGAVPTLSPYSTTIPLDLLSIYRVGQDRVAPSSALPIGAERVLSEMQVVKLDPVNSSNDMSMLLHSVLALVEPPPRNQSKDETSSPDDPGHHDYEDDELLGAAILGFVHVSDMDLHRKKLTVLSPKPGKLPSTTALIGNLQWQDM</sequence>
<protein>
    <recommendedName>
        <fullName evidence="1">mRNA cleavage and polyadenylation factor CLP1</fullName>
    </recommendedName>
</protein>
<accession>A8PWG8</accession>
<keyword id="KW-0067">ATP-binding</keyword>
<keyword id="KW-0507">mRNA processing</keyword>
<keyword id="KW-0547">Nucleotide-binding</keyword>
<keyword id="KW-0539">Nucleus</keyword>
<keyword id="KW-1185">Reference proteome</keyword>
<organism>
    <name type="scientific">Malassezia globosa (strain ATCC MYA-4612 / CBS 7966)</name>
    <name type="common">Dandruff-associated fungus</name>
    <dbReference type="NCBI Taxonomy" id="425265"/>
    <lineage>
        <taxon>Eukaryota</taxon>
        <taxon>Fungi</taxon>
        <taxon>Dikarya</taxon>
        <taxon>Basidiomycota</taxon>
        <taxon>Ustilaginomycotina</taxon>
        <taxon>Malasseziomycetes</taxon>
        <taxon>Malasseziales</taxon>
        <taxon>Malasseziaceae</taxon>
        <taxon>Malassezia</taxon>
    </lineage>
</organism>
<comment type="function">
    <text evidence="1">Required for endonucleolytic cleavage during polyadenylation-dependent pre-mRNA 3'-end formation.</text>
</comment>
<comment type="subunit">
    <text evidence="1">Component of a pre-mRNA cleavage factor complex. Interacts directly with PCF11.</text>
</comment>
<comment type="subcellular location">
    <subcellularLocation>
        <location evidence="1">Nucleus</location>
    </subcellularLocation>
</comment>
<comment type="similarity">
    <text evidence="1">Belongs to the Clp1 family. Clp1 subfamily.</text>
</comment>
<comment type="caution">
    <text evidence="3">May lack the polyribonucleotide 5'-hydroxyl-kinase and polynucleotide 5'-hydroxyl-kinase activities that are characteristic of the human ortholog.</text>
</comment>
<reference key="1">
    <citation type="journal article" date="2007" name="Proc. Natl. Acad. Sci. U.S.A.">
        <title>Dandruff-associated Malassezia genomes reveal convergent and divergent virulence traits shared with plant and human fungal pathogens.</title>
        <authorList>
            <person name="Xu J."/>
            <person name="Saunders C.W."/>
            <person name="Hu P."/>
            <person name="Grant R.A."/>
            <person name="Boekhout T."/>
            <person name="Kuramae E.E."/>
            <person name="Kronstad J.W."/>
            <person name="DeAngelis Y.M."/>
            <person name="Reeder N.L."/>
            <person name="Johnstone K.R."/>
            <person name="Leland M."/>
            <person name="Fieno A.M."/>
            <person name="Begley W.M."/>
            <person name="Sun Y."/>
            <person name="Lacey M.P."/>
            <person name="Chaudhary T."/>
            <person name="Keough T."/>
            <person name="Chu L."/>
            <person name="Sears R."/>
            <person name="Yuan B."/>
            <person name="Dawson T.L. Jr."/>
        </authorList>
    </citation>
    <scope>NUCLEOTIDE SEQUENCE [LARGE SCALE GENOMIC DNA]</scope>
    <source>
        <strain>ATCC MYA-4612 / CBS 7966</strain>
    </source>
</reference>
<dbReference type="EMBL" id="AAYY01000003">
    <property type="protein sequence ID" value="EDP44613.1"/>
    <property type="molecule type" value="Genomic_DNA"/>
</dbReference>
<dbReference type="RefSeq" id="XP_001731827.1">
    <property type="nucleotide sequence ID" value="XM_001731775.1"/>
</dbReference>
<dbReference type="SMR" id="A8PWG8"/>
<dbReference type="FunCoup" id="A8PWG8">
    <property type="interactions" value="478"/>
</dbReference>
<dbReference type="STRING" id="425265.A8PWG8"/>
<dbReference type="GeneID" id="5856132"/>
<dbReference type="KEGG" id="mgl:MGL_1095"/>
<dbReference type="VEuPathDB" id="FungiDB:MGL_1095"/>
<dbReference type="InParanoid" id="A8PWG8"/>
<dbReference type="OMA" id="DITGWWP"/>
<dbReference type="OrthoDB" id="258143at2759"/>
<dbReference type="Proteomes" id="UP000008837">
    <property type="component" value="Unassembled WGS sequence"/>
</dbReference>
<dbReference type="GO" id="GO:0005849">
    <property type="term" value="C:mRNA cleavage factor complex"/>
    <property type="evidence" value="ECO:0007669"/>
    <property type="project" value="UniProtKB-UniRule"/>
</dbReference>
<dbReference type="GO" id="GO:0005524">
    <property type="term" value="F:ATP binding"/>
    <property type="evidence" value="ECO:0007669"/>
    <property type="project" value="UniProtKB-UniRule"/>
</dbReference>
<dbReference type="GO" id="GO:0051731">
    <property type="term" value="F:polynucleotide 5'-hydroxyl-kinase activity"/>
    <property type="evidence" value="ECO:0007669"/>
    <property type="project" value="InterPro"/>
</dbReference>
<dbReference type="GO" id="GO:0031124">
    <property type="term" value="P:mRNA 3'-end processing"/>
    <property type="evidence" value="ECO:0007669"/>
    <property type="project" value="UniProtKB-UniRule"/>
</dbReference>
<dbReference type="GO" id="GO:0006388">
    <property type="term" value="P:tRNA splicing, via endonucleolytic cleavage and ligation"/>
    <property type="evidence" value="ECO:0007669"/>
    <property type="project" value="TreeGrafter"/>
</dbReference>
<dbReference type="Gene3D" id="2.60.120.1030">
    <property type="entry name" value="Clp1, DNA binding domain"/>
    <property type="match status" value="1"/>
</dbReference>
<dbReference type="Gene3D" id="3.40.50.300">
    <property type="entry name" value="P-loop containing nucleotide triphosphate hydrolases"/>
    <property type="match status" value="1"/>
</dbReference>
<dbReference type="Gene3D" id="2.40.30.330">
    <property type="entry name" value="Pre-mRNA cleavage complex subunit Clp1, C-terminal domain"/>
    <property type="match status" value="1"/>
</dbReference>
<dbReference type="HAMAP" id="MF_03035">
    <property type="entry name" value="Clp1"/>
    <property type="match status" value="1"/>
</dbReference>
<dbReference type="InterPro" id="IPR028606">
    <property type="entry name" value="Clp1"/>
</dbReference>
<dbReference type="InterPro" id="IPR045116">
    <property type="entry name" value="Clp1/Grc3"/>
</dbReference>
<dbReference type="InterPro" id="IPR010655">
    <property type="entry name" value="Clp1_C"/>
</dbReference>
<dbReference type="InterPro" id="IPR038238">
    <property type="entry name" value="Clp1_C_sf"/>
</dbReference>
<dbReference type="InterPro" id="IPR032324">
    <property type="entry name" value="Clp1_N"/>
</dbReference>
<dbReference type="InterPro" id="IPR038239">
    <property type="entry name" value="Clp1_N_sf"/>
</dbReference>
<dbReference type="InterPro" id="IPR032319">
    <property type="entry name" value="CLP1_P"/>
</dbReference>
<dbReference type="InterPro" id="IPR027417">
    <property type="entry name" value="P-loop_NTPase"/>
</dbReference>
<dbReference type="PANTHER" id="PTHR12755">
    <property type="entry name" value="CLEAVAGE/POLYADENYLATION FACTOR IA SUBUNIT CLP1P"/>
    <property type="match status" value="1"/>
</dbReference>
<dbReference type="PANTHER" id="PTHR12755:SF6">
    <property type="entry name" value="POLYRIBONUCLEOTIDE 5'-HYDROXYL-KINASE CLP1"/>
    <property type="match status" value="1"/>
</dbReference>
<dbReference type="Pfam" id="PF06807">
    <property type="entry name" value="Clp1"/>
    <property type="match status" value="1"/>
</dbReference>
<dbReference type="Pfam" id="PF16573">
    <property type="entry name" value="CLP1_N"/>
    <property type="match status" value="1"/>
</dbReference>
<dbReference type="Pfam" id="PF16575">
    <property type="entry name" value="CLP1_P"/>
    <property type="match status" value="1"/>
</dbReference>
<dbReference type="SUPFAM" id="SSF52540">
    <property type="entry name" value="P-loop containing nucleoside triphosphate hydrolases"/>
    <property type="match status" value="1"/>
</dbReference>
<evidence type="ECO:0000255" key="1">
    <source>
        <dbReference type="HAMAP-Rule" id="MF_03035"/>
    </source>
</evidence>
<evidence type="ECO:0000256" key="2">
    <source>
        <dbReference type="SAM" id="MobiDB-lite"/>
    </source>
</evidence>
<evidence type="ECO:0000305" key="3"/>
<name>CLP1_MALGO</name>
<proteinExistence type="inferred from homology"/>
<feature type="chain" id="PRO_0000375210" description="mRNA cleavage and polyadenylation factor CLP1">
    <location>
        <begin position="1"/>
        <end position="665"/>
    </location>
</feature>
<feature type="region of interest" description="Disordered" evidence="2">
    <location>
        <begin position="218"/>
        <end position="283"/>
    </location>
</feature>
<feature type="region of interest" description="Disordered" evidence="2">
    <location>
        <begin position="593"/>
        <end position="615"/>
    </location>
</feature>
<feature type="compositionally biased region" description="Basic and acidic residues" evidence="2">
    <location>
        <begin position="219"/>
        <end position="238"/>
    </location>
</feature>
<feature type="compositionally biased region" description="Basic and acidic residues" evidence="2">
    <location>
        <begin position="598"/>
        <end position="614"/>
    </location>
</feature>
<feature type="binding site" evidence="1">
    <location>
        <position position="91"/>
    </location>
    <ligand>
        <name>ATP</name>
        <dbReference type="ChEBI" id="CHEBI:30616"/>
    </ligand>
</feature>
<feature type="binding site" evidence="1">
    <location>
        <begin position="195"/>
        <end position="200"/>
    </location>
    <ligand>
        <name>ATP</name>
        <dbReference type="ChEBI" id="CHEBI:30616"/>
    </ligand>
</feature>
<gene>
    <name evidence="1" type="primary">CLP1</name>
    <name type="ORF">MGL_1095</name>
</gene>